<evidence type="ECO:0000250" key="1">
    <source>
        <dbReference type="UniProtKB" id="Q96I36"/>
    </source>
</evidence>
<evidence type="ECO:0000255" key="2"/>
<evidence type="ECO:0000305" key="3"/>
<keyword id="KW-0472">Membrane</keyword>
<keyword id="KW-0496">Mitochondrion</keyword>
<keyword id="KW-1000">Mitochondrion outer membrane</keyword>
<keyword id="KW-1185">Reference proteome</keyword>
<keyword id="KW-0812">Transmembrane</keyword>
<keyword id="KW-1133">Transmembrane helix</keyword>
<sequence length="57" mass="6380">MPSAKQLADIGYKTFSASMMLLTVYGGYLCSVRAYRYLQLRSARRQAAEEQKTSGVL</sequence>
<reference key="1">
    <citation type="journal article" date="2005" name="Science">
        <title>The transcriptional landscape of the mammalian genome.</title>
        <authorList>
            <person name="Carninci P."/>
            <person name="Kasukawa T."/>
            <person name="Katayama S."/>
            <person name="Gough J."/>
            <person name="Frith M.C."/>
            <person name="Maeda N."/>
            <person name="Oyama R."/>
            <person name="Ravasi T."/>
            <person name="Lenhard B."/>
            <person name="Wells C."/>
            <person name="Kodzius R."/>
            <person name="Shimokawa K."/>
            <person name="Bajic V.B."/>
            <person name="Brenner S.E."/>
            <person name="Batalov S."/>
            <person name="Forrest A.R."/>
            <person name="Zavolan M."/>
            <person name="Davis M.J."/>
            <person name="Wilming L.G."/>
            <person name="Aidinis V."/>
            <person name="Allen J.E."/>
            <person name="Ambesi-Impiombato A."/>
            <person name="Apweiler R."/>
            <person name="Aturaliya R.N."/>
            <person name="Bailey T.L."/>
            <person name="Bansal M."/>
            <person name="Baxter L."/>
            <person name="Beisel K.W."/>
            <person name="Bersano T."/>
            <person name="Bono H."/>
            <person name="Chalk A.M."/>
            <person name="Chiu K.P."/>
            <person name="Choudhary V."/>
            <person name="Christoffels A."/>
            <person name="Clutterbuck D.R."/>
            <person name="Crowe M.L."/>
            <person name="Dalla E."/>
            <person name="Dalrymple B.P."/>
            <person name="de Bono B."/>
            <person name="Della Gatta G."/>
            <person name="di Bernardo D."/>
            <person name="Down T."/>
            <person name="Engstrom P."/>
            <person name="Fagiolini M."/>
            <person name="Faulkner G."/>
            <person name="Fletcher C.F."/>
            <person name="Fukushima T."/>
            <person name="Furuno M."/>
            <person name="Futaki S."/>
            <person name="Gariboldi M."/>
            <person name="Georgii-Hemming P."/>
            <person name="Gingeras T.R."/>
            <person name="Gojobori T."/>
            <person name="Green R.E."/>
            <person name="Gustincich S."/>
            <person name="Harbers M."/>
            <person name="Hayashi Y."/>
            <person name="Hensch T.K."/>
            <person name="Hirokawa N."/>
            <person name="Hill D."/>
            <person name="Huminiecki L."/>
            <person name="Iacono M."/>
            <person name="Ikeo K."/>
            <person name="Iwama A."/>
            <person name="Ishikawa T."/>
            <person name="Jakt M."/>
            <person name="Kanapin A."/>
            <person name="Katoh M."/>
            <person name="Kawasawa Y."/>
            <person name="Kelso J."/>
            <person name="Kitamura H."/>
            <person name="Kitano H."/>
            <person name="Kollias G."/>
            <person name="Krishnan S.P."/>
            <person name="Kruger A."/>
            <person name="Kummerfeld S.K."/>
            <person name="Kurochkin I.V."/>
            <person name="Lareau L.F."/>
            <person name="Lazarevic D."/>
            <person name="Lipovich L."/>
            <person name="Liu J."/>
            <person name="Liuni S."/>
            <person name="McWilliam S."/>
            <person name="Madan Babu M."/>
            <person name="Madera M."/>
            <person name="Marchionni L."/>
            <person name="Matsuda H."/>
            <person name="Matsuzawa S."/>
            <person name="Miki H."/>
            <person name="Mignone F."/>
            <person name="Miyake S."/>
            <person name="Morris K."/>
            <person name="Mottagui-Tabar S."/>
            <person name="Mulder N."/>
            <person name="Nakano N."/>
            <person name="Nakauchi H."/>
            <person name="Ng P."/>
            <person name="Nilsson R."/>
            <person name="Nishiguchi S."/>
            <person name="Nishikawa S."/>
            <person name="Nori F."/>
            <person name="Ohara O."/>
            <person name="Okazaki Y."/>
            <person name="Orlando V."/>
            <person name="Pang K.C."/>
            <person name="Pavan W.J."/>
            <person name="Pavesi G."/>
            <person name="Pesole G."/>
            <person name="Petrovsky N."/>
            <person name="Piazza S."/>
            <person name="Reed J."/>
            <person name="Reid J.F."/>
            <person name="Ring B.Z."/>
            <person name="Ringwald M."/>
            <person name="Rost B."/>
            <person name="Ruan Y."/>
            <person name="Salzberg S.L."/>
            <person name="Sandelin A."/>
            <person name="Schneider C."/>
            <person name="Schoenbach C."/>
            <person name="Sekiguchi K."/>
            <person name="Semple C.A."/>
            <person name="Seno S."/>
            <person name="Sessa L."/>
            <person name="Sheng Y."/>
            <person name="Shibata Y."/>
            <person name="Shimada H."/>
            <person name="Shimada K."/>
            <person name="Silva D."/>
            <person name="Sinclair B."/>
            <person name="Sperling S."/>
            <person name="Stupka E."/>
            <person name="Sugiura K."/>
            <person name="Sultana R."/>
            <person name="Takenaka Y."/>
            <person name="Taki K."/>
            <person name="Tammoja K."/>
            <person name="Tan S.L."/>
            <person name="Tang S."/>
            <person name="Taylor M.S."/>
            <person name="Tegner J."/>
            <person name="Teichmann S.A."/>
            <person name="Ueda H.R."/>
            <person name="van Nimwegen E."/>
            <person name="Verardo R."/>
            <person name="Wei C.L."/>
            <person name="Yagi K."/>
            <person name="Yamanishi H."/>
            <person name="Zabarovsky E."/>
            <person name="Zhu S."/>
            <person name="Zimmer A."/>
            <person name="Hide W."/>
            <person name="Bult C."/>
            <person name="Grimmond S.M."/>
            <person name="Teasdale R.D."/>
            <person name="Liu E.T."/>
            <person name="Brusic V."/>
            <person name="Quackenbush J."/>
            <person name="Wahlestedt C."/>
            <person name="Mattick J.S."/>
            <person name="Hume D.A."/>
            <person name="Kai C."/>
            <person name="Sasaki D."/>
            <person name="Tomaru Y."/>
            <person name="Fukuda S."/>
            <person name="Kanamori-Katayama M."/>
            <person name="Suzuki M."/>
            <person name="Aoki J."/>
            <person name="Arakawa T."/>
            <person name="Iida J."/>
            <person name="Imamura K."/>
            <person name="Itoh M."/>
            <person name="Kato T."/>
            <person name="Kawaji H."/>
            <person name="Kawagashira N."/>
            <person name="Kawashima T."/>
            <person name="Kojima M."/>
            <person name="Kondo S."/>
            <person name="Konno H."/>
            <person name="Nakano K."/>
            <person name="Ninomiya N."/>
            <person name="Nishio T."/>
            <person name="Okada M."/>
            <person name="Plessy C."/>
            <person name="Shibata K."/>
            <person name="Shiraki T."/>
            <person name="Suzuki S."/>
            <person name="Tagami M."/>
            <person name="Waki K."/>
            <person name="Watahiki A."/>
            <person name="Okamura-Oho Y."/>
            <person name="Suzuki H."/>
            <person name="Kawai J."/>
            <person name="Hayashizaki Y."/>
        </authorList>
    </citation>
    <scope>NUCLEOTIDE SEQUENCE [LARGE SCALE MRNA]</scope>
    <source>
        <strain>C57BL/6J</strain>
        <tissue>Embryo</tissue>
        <tissue>Kidney</tissue>
        <tissue>Tongue</tissue>
    </source>
</reference>
<reference key="2">
    <citation type="journal article" date="2004" name="Genome Res.">
        <title>The status, quality, and expansion of the NIH full-length cDNA project: the Mammalian Gene Collection (MGC).</title>
        <authorList>
            <consortium name="The MGC Project Team"/>
        </authorList>
    </citation>
    <scope>NUCLEOTIDE SEQUENCE [LARGE SCALE MRNA]</scope>
    <source>
        <strain>C57BL/6J</strain>
        <tissue>Brain</tissue>
    </source>
</reference>
<proteinExistence type="inferred from homology"/>
<dbReference type="EMBL" id="AK002816">
    <property type="protein sequence ID" value="BAC25008.1"/>
    <property type="molecule type" value="mRNA"/>
</dbReference>
<dbReference type="EMBL" id="AK004378">
    <property type="protein sequence ID" value="BAC25080.1"/>
    <property type="molecule type" value="mRNA"/>
</dbReference>
<dbReference type="EMBL" id="AK009401">
    <property type="protein sequence ID" value="BAC25256.1"/>
    <property type="molecule type" value="mRNA"/>
</dbReference>
<dbReference type="EMBL" id="BC059905">
    <property type="protein sequence ID" value="AAH59905.1"/>
    <property type="molecule type" value="mRNA"/>
</dbReference>
<dbReference type="EMBL" id="BC092142">
    <property type="protein sequence ID" value="AAH92142.1"/>
    <property type="molecule type" value="mRNA"/>
</dbReference>
<dbReference type="CCDS" id="CCDS37205.1"/>
<dbReference type="RefSeq" id="NP_899079.1">
    <property type="nucleotide sequence ID" value="NM_183256.3"/>
</dbReference>
<dbReference type="FunCoup" id="Q8BH51">
    <property type="interactions" value="679"/>
</dbReference>
<dbReference type="STRING" id="10090.ENSMUSP00000023761"/>
<dbReference type="PhosphoSitePlus" id="Q8BH51"/>
<dbReference type="jPOST" id="Q8BH51"/>
<dbReference type="PaxDb" id="10090-ENSMUSP00000023761"/>
<dbReference type="PeptideAtlas" id="Q8BH51"/>
<dbReference type="ProteomicsDB" id="285254"/>
<dbReference type="Antibodypedia" id="49669">
    <property type="antibodies" value="11 antibodies from 6 providers"/>
</dbReference>
<dbReference type="Ensembl" id="ENSMUST00000023761.4">
    <property type="protein sequence ID" value="ENSMUSP00000023761.3"/>
    <property type="gene ID" value="ENSMUSG00000023020.4"/>
</dbReference>
<dbReference type="GeneID" id="66379"/>
<dbReference type="KEGG" id="mmu:66379"/>
<dbReference type="UCSC" id="uc007xqe.2">
    <property type="organism name" value="mouse"/>
</dbReference>
<dbReference type="AGR" id="MGI:1913629"/>
<dbReference type="CTD" id="84987"/>
<dbReference type="MGI" id="MGI:1913629">
    <property type="gene designation" value="Cox14"/>
</dbReference>
<dbReference type="VEuPathDB" id="HostDB:ENSMUSG00000023020"/>
<dbReference type="eggNOG" id="ENOG502SCZ6">
    <property type="taxonomic scope" value="Eukaryota"/>
</dbReference>
<dbReference type="GeneTree" id="ENSGT00390000002190"/>
<dbReference type="HOGENOM" id="CLU_209431_0_0_1"/>
<dbReference type="InParanoid" id="Q8BH51"/>
<dbReference type="OMA" id="VYHYFQR"/>
<dbReference type="OrthoDB" id="9928108at2759"/>
<dbReference type="PhylomeDB" id="Q8BH51"/>
<dbReference type="TreeFam" id="TF338398"/>
<dbReference type="Reactome" id="R-MMU-9864848">
    <property type="pathway name" value="Complex IV assembly"/>
</dbReference>
<dbReference type="BioGRID-ORCS" id="66379">
    <property type="hits" value="4 hits in 73 CRISPR screens"/>
</dbReference>
<dbReference type="ChiTaRS" id="Cox14">
    <property type="organism name" value="mouse"/>
</dbReference>
<dbReference type="PRO" id="PR:Q8BH51"/>
<dbReference type="Proteomes" id="UP000000589">
    <property type="component" value="Chromosome 15"/>
</dbReference>
<dbReference type="RNAct" id="Q8BH51">
    <property type="molecule type" value="protein"/>
</dbReference>
<dbReference type="Bgee" id="ENSMUSG00000023020">
    <property type="expression patterns" value="Expressed in epiblast cell in embryo and 247 other cell types or tissues"/>
</dbReference>
<dbReference type="GO" id="GO:0005741">
    <property type="term" value="C:mitochondrial outer membrane"/>
    <property type="evidence" value="ECO:0000250"/>
    <property type="project" value="UniProtKB"/>
</dbReference>
<dbReference type="GO" id="GO:0005739">
    <property type="term" value="C:mitochondrion"/>
    <property type="evidence" value="ECO:0007005"/>
    <property type="project" value="MGI"/>
</dbReference>
<dbReference type="GO" id="GO:0033617">
    <property type="term" value="P:mitochondrial cytochrome c oxidase assembly"/>
    <property type="evidence" value="ECO:0000250"/>
    <property type="project" value="UniProtKB"/>
</dbReference>
<dbReference type="InterPro" id="IPR029208">
    <property type="entry name" value="COX14"/>
</dbReference>
<dbReference type="PANTHER" id="PTHR36684">
    <property type="entry name" value="CYTOCHROME C OXIDASE ASSEMBLY PROTEIN COX14"/>
    <property type="match status" value="1"/>
</dbReference>
<dbReference type="PANTHER" id="PTHR36684:SF1">
    <property type="entry name" value="CYTOCHROME C OXIDASE ASSEMBLY PROTEIN COX14"/>
    <property type="match status" value="1"/>
</dbReference>
<dbReference type="Pfam" id="PF14880">
    <property type="entry name" value="COX14"/>
    <property type="match status" value="1"/>
</dbReference>
<feature type="chain" id="PRO_0000263678" description="Cytochrome c oxidase assembly protein COX14">
    <location>
        <begin position="1"/>
        <end position="57"/>
    </location>
</feature>
<feature type="topological domain" description="Mitochondrial intermembrane" evidence="3">
    <location>
        <begin position="1"/>
        <end position="14"/>
    </location>
</feature>
<feature type="transmembrane region" description="Helical" evidence="2">
    <location>
        <begin position="15"/>
        <end position="37"/>
    </location>
</feature>
<feature type="topological domain" description="Cytoplasmic" evidence="3">
    <location>
        <begin position="38"/>
        <end position="57"/>
    </location>
</feature>
<comment type="function">
    <text evidence="1">Core component of the MITRAC (mitochondrial translation regulation assembly intermediate of cytochrome c oxidase complex) complex, that regulates cytochrome c oxidase assembly. Requires for coordination of the early steps of cytochrome c oxidase assembly with the synthesis of MT-CO1.</text>
</comment>
<comment type="subunit">
    <text evidence="1">Along with COA3, core component of the MITRAC (mitochondrial translation regulation assembly intermediate of cytochrome c oxidase complex) complex.</text>
</comment>
<comment type="subcellular location">
    <subcellularLocation>
        <location evidence="1">Mitochondrion outer membrane</location>
        <topology evidence="2">Single-pass membrane protein</topology>
    </subcellularLocation>
</comment>
<protein>
    <recommendedName>
        <fullName>Cytochrome c oxidase assembly protein COX14</fullName>
    </recommendedName>
</protein>
<organism>
    <name type="scientific">Mus musculus</name>
    <name type="common">Mouse</name>
    <dbReference type="NCBI Taxonomy" id="10090"/>
    <lineage>
        <taxon>Eukaryota</taxon>
        <taxon>Metazoa</taxon>
        <taxon>Chordata</taxon>
        <taxon>Craniata</taxon>
        <taxon>Vertebrata</taxon>
        <taxon>Euteleostomi</taxon>
        <taxon>Mammalia</taxon>
        <taxon>Eutheria</taxon>
        <taxon>Euarchontoglires</taxon>
        <taxon>Glires</taxon>
        <taxon>Rodentia</taxon>
        <taxon>Myomorpha</taxon>
        <taxon>Muroidea</taxon>
        <taxon>Muridae</taxon>
        <taxon>Murinae</taxon>
        <taxon>Mus</taxon>
        <taxon>Mus</taxon>
    </lineage>
</organism>
<gene>
    <name type="primary">Cox14</name>
</gene>
<accession>Q8BH51</accession>
<name>COX14_MOUSE</name>